<accession>B2A4Q6</accession>
<organism>
    <name type="scientific">Natranaerobius thermophilus (strain ATCC BAA-1301 / DSM 18059 / JW/NM-WN-LF)</name>
    <dbReference type="NCBI Taxonomy" id="457570"/>
    <lineage>
        <taxon>Bacteria</taxon>
        <taxon>Bacillati</taxon>
        <taxon>Bacillota</taxon>
        <taxon>Clostridia</taxon>
        <taxon>Natranaerobiales</taxon>
        <taxon>Natranaerobiaceae</taxon>
        <taxon>Natranaerobius</taxon>
    </lineage>
</organism>
<name>RL13_NATTJ</name>
<evidence type="ECO:0000255" key="1">
    <source>
        <dbReference type="HAMAP-Rule" id="MF_01366"/>
    </source>
</evidence>
<evidence type="ECO:0000305" key="2"/>
<sequence length="143" mass="16375">MRTTYMAKPHEVERKWYTIDATNKPLGRLASEIAEILRGKHKPTFTPHVDTGDYVIVLNAEKVLLTGKKRTQKHHYRHSGYPGGLKAINYETLLNTKPEKAIELAVKGMLPKNRLGRKMIKKLKVYAGDEHPHQAQQPEPWEG</sequence>
<comment type="function">
    <text evidence="1">This protein is one of the early assembly proteins of the 50S ribosomal subunit, although it is not seen to bind rRNA by itself. It is important during the early stages of 50S assembly.</text>
</comment>
<comment type="subunit">
    <text evidence="1">Part of the 50S ribosomal subunit.</text>
</comment>
<comment type="similarity">
    <text evidence="1">Belongs to the universal ribosomal protein uL13 family.</text>
</comment>
<reference key="1">
    <citation type="submission" date="2008-04" db="EMBL/GenBank/DDBJ databases">
        <title>Complete sequence of chromosome of Natranaerobius thermophilus JW/NM-WN-LF.</title>
        <authorList>
            <consortium name="US DOE Joint Genome Institute"/>
            <person name="Copeland A."/>
            <person name="Lucas S."/>
            <person name="Lapidus A."/>
            <person name="Glavina del Rio T."/>
            <person name="Dalin E."/>
            <person name="Tice H."/>
            <person name="Bruce D."/>
            <person name="Goodwin L."/>
            <person name="Pitluck S."/>
            <person name="Chertkov O."/>
            <person name="Brettin T."/>
            <person name="Detter J.C."/>
            <person name="Han C."/>
            <person name="Kuske C.R."/>
            <person name="Schmutz J."/>
            <person name="Larimer F."/>
            <person name="Land M."/>
            <person name="Hauser L."/>
            <person name="Kyrpides N."/>
            <person name="Lykidis A."/>
            <person name="Mesbah N.M."/>
            <person name="Wiegel J."/>
        </authorList>
    </citation>
    <scope>NUCLEOTIDE SEQUENCE [LARGE SCALE GENOMIC DNA]</scope>
    <source>
        <strain>ATCC BAA-1301 / DSM 18059 / JW/NM-WN-LF</strain>
    </source>
</reference>
<gene>
    <name evidence="1" type="primary">rplM</name>
    <name type="ordered locus">Nther_0229</name>
</gene>
<proteinExistence type="inferred from homology"/>
<keyword id="KW-1185">Reference proteome</keyword>
<keyword id="KW-0687">Ribonucleoprotein</keyword>
<keyword id="KW-0689">Ribosomal protein</keyword>
<protein>
    <recommendedName>
        <fullName evidence="1">Large ribosomal subunit protein uL13</fullName>
    </recommendedName>
    <alternativeName>
        <fullName evidence="2">50S ribosomal protein L13</fullName>
    </alternativeName>
</protein>
<dbReference type="EMBL" id="CP001034">
    <property type="protein sequence ID" value="ACB83828.1"/>
    <property type="molecule type" value="Genomic_DNA"/>
</dbReference>
<dbReference type="RefSeq" id="WP_012446717.1">
    <property type="nucleotide sequence ID" value="NC_010718.1"/>
</dbReference>
<dbReference type="SMR" id="B2A4Q6"/>
<dbReference type="FunCoup" id="B2A4Q6">
    <property type="interactions" value="456"/>
</dbReference>
<dbReference type="STRING" id="457570.Nther_0229"/>
<dbReference type="KEGG" id="nth:Nther_0229"/>
<dbReference type="eggNOG" id="COG0102">
    <property type="taxonomic scope" value="Bacteria"/>
</dbReference>
<dbReference type="HOGENOM" id="CLU_082184_2_2_9"/>
<dbReference type="InParanoid" id="B2A4Q6"/>
<dbReference type="OrthoDB" id="9801330at2"/>
<dbReference type="Proteomes" id="UP000001683">
    <property type="component" value="Chromosome"/>
</dbReference>
<dbReference type="GO" id="GO:0022625">
    <property type="term" value="C:cytosolic large ribosomal subunit"/>
    <property type="evidence" value="ECO:0007669"/>
    <property type="project" value="TreeGrafter"/>
</dbReference>
<dbReference type="GO" id="GO:0003729">
    <property type="term" value="F:mRNA binding"/>
    <property type="evidence" value="ECO:0007669"/>
    <property type="project" value="TreeGrafter"/>
</dbReference>
<dbReference type="GO" id="GO:0003735">
    <property type="term" value="F:structural constituent of ribosome"/>
    <property type="evidence" value="ECO:0007669"/>
    <property type="project" value="InterPro"/>
</dbReference>
<dbReference type="GO" id="GO:0017148">
    <property type="term" value="P:negative regulation of translation"/>
    <property type="evidence" value="ECO:0007669"/>
    <property type="project" value="TreeGrafter"/>
</dbReference>
<dbReference type="GO" id="GO:0006412">
    <property type="term" value="P:translation"/>
    <property type="evidence" value="ECO:0007669"/>
    <property type="project" value="UniProtKB-UniRule"/>
</dbReference>
<dbReference type="CDD" id="cd00392">
    <property type="entry name" value="Ribosomal_L13"/>
    <property type="match status" value="1"/>
</dbReference>
<dbReference type="FunFam" id="3.90.1180.10:FF:000001">
    <property type="entry name" value="50S ribosomal protein L13"/>
    <property type="match status" value="1"/>
</dbReference>
<dbReference type="Gene3D" id="3.90.1180.10">
    <property type="entry name" value="Ribosomal protein L13"/>
    <property type="match status" value="1"/>
</dbReference>
<dbReference type="HAMAP" id="MF_01366">
    <property type="entry name" value="Ribosomal_uL13"/>
    <property type="match status" value="1"/>
</dbReference>
<dbReference type="InterPro" id="IPR005822">
    <property type="entry name" value="Ribosomal_uL13"/>
</dbReference>
<dbReference type="InterPro" id="IPR005823">
    <property type="entry name" value="Ribosomal_uL13_bac-type"/>
</dbReference>
<dbReference type="InterPro" id="IPR023563">
    <property type="entry name" value="Ribosomal_uL13_CS"/>
</dbReference>
<dbReference type="InterPro" id="IPR036899">
    <property type="entry name" value="Ribosomal_uL13_sf"/>
</dbReference>
<dbReference type="NCBIfam" id="TIGR01066">
    <property type="entry name" value="rplM_bact"/>
    <property type="match status" value="1"/>
</dbReference>
<dbReference type="PANTHER" id="PTHR11545:SF2">
    <property type="entry name" value="LARGE RIBOSOMAL SUBUNIT PROTEIN UL13M"/>
    <property type="match status" value="1"/>
</dbReference>
<dbReference type="PANTHER" id="PTHR11545">
    <property type="entry name" value="RIBOSOMAL PROTEIN L13"/>
    <property type="match status" value="1"/>
</dbReference>
<dbReference type="Pfam" id="PF00572">
    <property type="entry name" value="Ribosomal_L13"/>
    <property type="match status" value="1"/>
</dbReference>
<dbReference type="PIRSF" id="PIRSF002181">
    <property type="entry name" value="Ribosomal_L13"/>
    <property type="match status" value="1"/>
</dbReference>
<dbReference type="SUPFAM" id="SSF52161">
    <property type="entry name" value="Ribosomal protein L13"/>
    <property type="match status" value="1"/>
</dbReference>
<dbReference type="PROSITE" id="PS00783">
    <property type="entry name" value="RIBOSOMAL_L13"/>
    <property type="match status" value="1"/>
</dbReference>
<feature type="chain" id="PRO_1000144158" description="Large ribosomal subunit protein uL13">
    <location>
        <begin position="1"/>
        <end position="143"/>
    </location>
</feature>